<feature type="signal peptide" evidence="2">
    <location>
        <begin position="1"/>
        <end position="31"/>
    </location>
</feature>
<feature type="chain" id="PRO_0000411211" description="Putative dipeptidase MGYG_00085">
    <location>
        <begin position="32"/>
        <end position="425"/>
    </location>
</feature>
<feature type="binding site" evidence="3">
    <location>
        <position position="56"/>
    </location>
    <ligand>
        <name>Zn(2+)</name>
        <dbReference type="ChEBI" id="CHEBI:29105"/>
        <label>1</label>
        <note>catalytic</note>
    </ligand>
</feature>
<feature type="binding site" evidence="3">
    <location>
        <position position="58"/>
    </location>
    <ligand>
        <name>Zn(2+)</name>
        <dbReference type="ChEBI" id="CHEBI:29105"/>
        <label>1</label>
        <note>catalytic</note>
    </ligand>
</feature>
<feature type="binding site" evidence="3">
    <location>
        <position position="168"/>
    </location>
    <ligand>
        <name>Zn(2+)</name>
        <dbReference type="ChEBI" id="CHEBI:29105"/>
        <label>1</label>
        <note>catalytic</note>
    </ligand>
</feature>
<feature type="binding site" evidence="3">
    <location>
        <position position="168"/>
    </location>
    <ligand>
        <name>Zn(2+)</name>
        <dbReference type="ChEBI" id="CHEBI:29105"/>
        <label>2</label>
        <note>catalytic</note>
    </ligand>
</feature>
<feature type="binding site" evidence="3">
    <location>
        <position position="195"/>
    </location>
    <ligand>
        <name>substrate</name>
    </ligand>
</feature>
<feature type="binding site" evidence="3">
    <location>
        <position position="239"/>
    </location>
    <ligand>
        <name>Zn(2+)</name>
        <dbReference type="ChEBI" id="CHEBI:29105"/>
        <label>2</label>
        <note>catalytic</note>
    </ligand>
</feature>
<feature type="binding site" evidence="3">
    <location>
        <position position="260"/>
    </location>
    <ligand>
        <name>Zn(2+)</name>
        <dbReference type="ChEBI" id="CHEBI:29105"/>
        <label>2</label>
        <note>catalytic</note>
    </ligand>
</feature>
<feature type="binding site" evidence="3">
    <location>
        <position position="271"/>
    </location>
    <ligand>
        <name>substrate</name>
    </ligand>
</feature>
<feature type="binding site" evidence="3">
    <location>
        <position position="331"/>
    </location>
    <ligand>
        <name>substrate</name>
    </ligand>
</feature>
<feature type="glycosylation site" description="N-linked (GlcNAc...) asparagine" evidence="2">
    <location>
        <position position="403"/>
    </location>
</feature>
<feature type="disulfide bond" evidence="3">
    <location>
        <begin position="107"/>
        <end position="197"/>
    </location>
</feature>
<dbReference type="EC" id="3.4.13.19" evidence="3"/>
<dbReference type="EMBL" id="DS989822">
    <property type="protein sequence ID" value="EFQ97041.1"/>
    <property type="molecule type" value="Genomic_DNA"/>
</dbReference>
<dbReference type="RefSeq" id="XP_003175993.1">
    <property type="nucleotide sequence ID" value="XM_003175945.1"/>
</dbReference>
<dbReference type="SMR" id="E5R2Q7"/>
<dbReference type="GeneID" id="10031304"/>
<dbReference type="VEuPathDB" id="FungiDB:MGYG_00085"/>
<dbReference type="eggNOG" id="KOG4127">
    <property type="taxonomic scope" value="Eukaryota"/>
</dbReference>
<dbReference type="HOGENOM" id="CLU_031404_4_2_1"/>
<dbReference type="InParanoid" id="E5R2Q7"/>
<dbReference type="OMA" id="WSGNVLR"/>
<dbReference type="OrthoDB" id="445695at2759"/>
<dbReference type="Proteomes" id="UP000002669">
    <property type="component" value="Unassembled WGS sequence"/>
</dbReference>
<dbReference type="GO" id="GO:0046872">
    <property type="term" value="F:metal ion binding"/>
    <property type="evidence" value="ECO:0007669"/>
    <property type="project" value="UniProtKB-KW"/>
</dbReference>
<dbReference type="GO" id="GO:0070573">
    <property type="term" value="F:metallodipeptidase activity"/>
    <property type="evidence" value="ECO:0007669"/>
    <property type="project" value="InterPro"/>
</dbReference>
<dbReference type="GO" id="GO:0006508">
    <property type="term" value="P:proteolysis"/>
    <property type="evidence" value="ECO:0007669"/>
    <property type="project" value="UniProtKB-KW"/>
</dbReference>
<dbReference type="CDD" id="cd01301">
    <property type="entry name" value="rDP_like"/>
    <property type="match status" value="1"/>
</dbReference>
<dbReference type="Gene3D" id="3.20.20.140">
    <property type="entry name" value="Metal-dependent hydrolases"/>
    <property type="match status" value="1"/>
</dbReference>
<dbReference type="InterPro" id="IPR032466">
    <property type="entry name" value="Metal_Hydrolase"/>
</dbReference>
<dbReference type="InterPro" id="IPR008257">
    <property type="entry name" value="Pept_M19"/>
</dbReference>
<dbReference type="PANTHER" id="PTHR10443:SF12">
    <property type="entry name" value="DIPEPTIDASE"/>
    <property type="match status" value="1"/>
</dbReference>
<dbReference type="PANTHER" id="PTHR10443">
    <property type="entry name" value="MICROSOMAL DIPEPTIDASE"/>
    <property type="match status" value="1"/>
</dbReference>
<dbReference type="Pfam" id="PF01244">
    <property type="entry name" value="Peptidase_M19"/>
    <property type="match status" value="1"/>
</dbReference>
<dbReference type="SUPFAM" id="SSF51556">
    <property type="entry name" value="Metallo-dependent hydrolases"/>
    <property type="match status" value="1"/>
</dbReference>
<dbReference type="PROSITE" id="PS51365">
    <property type="entry name" value="RENAL_DIPEPTIDASE_2"/>
    <property type="match status" value="1"/>
</dbReference>
<organism>
    <name type="scientific">Arthroderma gypseum (strain ATCC MYA-4604 / CBS 118893)</name>
    <name type="common">Microsporum gypseum</name>
    <dbReference type="NCBI Taxonomy" id="535722"/>
    <lineage>
        <taxon>Eukaryota</taxon>
        <taxon>Fungi</taxon>
        <taxon>Dikarya</taxon>
        <taxon>Ascomycota</taxon>
        <taxon>Pezizomycotina</taxon>
        <taxon>Eurotiomycetes</taxon>
        <taxon>Eurotiomycetidae</taxon>
        <taxon>Onygenales</taxon>
        <taxon>Arthrodermataceae</taxon>
        <taxon>Nannizzia</taxon>
    </lineage>
</organism>
<protein>
    <recommendedName>
        <fullName>Putative dipeptidase MGYG_00085</fullName>
        <ecNumber evidence="3">3.4.13.19</ecNumber>
    </recommendedName>
</protein>
<gene>
    <name type="ORF">MGYG_00085</name>
</gene>
<sequence>MAPERRSRLSETAGLFVSLLALTSIVPVQAVATVPQTDYAKRAERVLRSAPLIDGHNDLPYAIRKSTRDQIYDGKLPFETSLKGHTDLPRMRKGRMGGQFWSVFIACPSDPNAPIDLPTFATRDTLEQIDVARRLVDKYSKDLMFCDNPGCAKRAFRQGKIGSFLGIEGGHQVGSSIAALRQAFYAGARYMTITHNCDNAWATAASTVRAGKPDLGMTDFGPALIKEMNRLGMLVDLSHVSHQSMRDILKVTKAPVIFSHSSAYEVSKHLRNVPDDVLKTVAKNNGVVMVTFVRTFVNVDDPDSVDVNTIVKHIFHIAKVAGWDHVGLGGDYDGTTELPKGLEDVSKYPYLIEKVLEAGATEEQARKLVGENVLRVWTEVEQIAKKIQRSGALPVEEVWKGRNGTALSERSTFIEGPAPLAYGCD</sequence>
<name>DPEP1_ARTGP</name>
<proteinExistence type="inferred from homology"/>
<accession>E5R2Q7</accession>
<evidence type="ECO:0000250" key="1"/>
<evidence type="ECO:0000255" key="2"/>
<evidence type="ECO:0000255" key="3">
    <source>
        <dbReference type="PROSITE-ProRule" id="PRU10073"/>
    </source>
</evidence>
<keyword id="KW-0224">Dipeptidase</keyword>
<keyword id="KW-1015">Disulfide bond</keyword>
<keyword id="KW-0325">Glycoprotein</keyword>
<keyword id="KW-0378">Hydrolase</keyword>
<keyword id="KW-0479">Metal-binding</keyword>
<keyword id="KW-0482">Metalloprotease</keyword>
<keyword id="KW-0645">Protease</keyword>
<keyword id="KW-1185">Reference proteome</keyword>
<keyword id="KW-0732">Signal</keyword>
<keyword id="KW-0862">Zinc</keyword>
<comment type="function">
    <text evidence="1">Hydrolyzes a wide range of dipeptides.</text>
</comment>
<comment type="catalytic activity">
    <reaction evidence="3">
        <text>an L-aminoacyl-L-amino acid + H2O = 2 an L-alpha-amino acid</text>
        <dbReference type="Rhea" id="RHEA:48940"/>
        <dbReference type="ChEBI" id="CHEBI:15377"/>
        <dbReference type="ChEBI" id="CHEBI:59869"/>
        <dbReference type="ChEBI" id="CHEBI:77460"/>
        <dbReference type="EC" id="3.4.13.19"/>
    </reaction>
</comment>
<comment type="cofactor">
    <cofactor evidence="3">
        <name>Zn(2+)</name>
        <dbReference type="ChEBI" id="CHEBI:29105"/>
    </cofactor>
</comment>
<comment type="similarity">
    <text evidence="3">Belongs to the metallo-dependent hydrolases superfamily. Peptidase M19 family.</text>
</comment>
<reference key="1">
    <citation type="journal article" date="2012" name="MBio">
        <title>Comparative genome analysis of Trichophyton rubrum and related dermatophytes reveals candidate genes involved in infection.</title>
        <authorList>
            <person name="Martinez D.A."/>
            <person name="Oliver B.G."/>
            <person name="Graeser Y."/>
            <person name="Goldberg J.M."/>
            <person name="Li W."/>
            <person name="Martinez-Rossi N.M."/>
            <person name="Monod M."/>
            <person name="Shelest E."/>
            <person name="Barton R.C."/>
            <person name="Birch E."/>
            <person name="Brakhage A.A."/>
            <person name="Chen Z."/>
            <person name="Gurr S.J."/>
            <person name="Heiman D."/>
            <person name="Heitman J."/>
            <person name="Kosti I."/>
            <person name="Rossi A."/>
            <person name="Saif S."/>
            <person name="Samalova M."/>
            <person name="Saunders C.W."/>
            <person name="Shea T."/>
            <person name="Summerbell R.C."/>
            <person name="Xu J."/>
            <person name="Young S."/>
            <person name="Zeng Q."/>
            <person name="Birren B.W."/>
            <person name="Cuomo C.A."/>
            <person name="White T.C."/>
        </authorList>
    </citation>
    <scope>NUCLEOTIDE SEQUENCE [LARGE SCALE GENOMIC DNA]</scope>
    <source>
        <strain>ATCC MYA-4604 / CBS 118893</strain>
    </source>
</reference>